<reference key="1">
    <citation type="journal article" date="1995" name="DNA Res.">
        <title>Sequence analysis of the genome of the unicellular cyanobacterium Synechocystis sp. strain PCC6803. I. Sequence features in the 1 Mb region from map positions 64% to 92% of the genome.</title>
        <authorList>
            <person name="Kaneko T."/>
            <person name="Tanaka A."/>
            <person name="Sato S."/>
            <person name="Kotani H."/>
            <person name="Sazuka T."/>
            <person name="Miyajima N."/>
            <person name="Sugiura M."/>
            <person name="Tabata S."/>
        </authorList>
    </citation>
    <scope>NUCLEOTIDE SEQUENCE [LARGE SCALE GENOMIC DNA]</scope>
    <source>
        <strain>ATCC 27184 / PCC 6803 / N-1</strain>
    </source>
</reference>
<reference key="2">
    <citation type="journal article" date="1996" name="DNA Res.">
        <title>Sequence analysis of the genome of the unicellular cyanobacterium Synechocystis sp. strain PCC6803. II. Sequence determination of the entire genome and assignment of potential protein-coding regions.</title>
        <authorList>
            <person name="Kaneko T."/>
            <person name="Sato S."/>
            <person name="Kotani H."/>
            <person name="Tanaka A."/>
            <person name="Asamizu E."/>
            <person name="Nakamura Y."/>
            <person name="Miyajima N."/>
            <person name="Hirosawa M."/>
            <person name="Sugiura M."/>
            <person name="Sasamoto S."/>
            <person name="Kimura T."/>
            <person name="Hosouchi T."/>
            <person name="Matsuno A."/>
            <person name="Muraki A."/>
            <person name="Nakazaki N."/>
            <person name="Naruo K."/>
            <person name="Okumura S."/>
            <person name="Shimpo S."/>
            <person name="Takeuchi C."/>
            <person name="Wada T."/>
            <person name="Watanabe A."/>
            <person name="Yamada M."/>
            <person name="Yasuda M."/>
            <person name="Tabata S."/>
        </authorList>
    </citation>
    <scope>NUCLEOTIDE SEQUENCE [LARGE SCALE GENOMIC DNA]</scope>
    <source>
        <strain>ATCC 27184 / PCC 6803 / Kazusa</strain>
    </source>
</reference>
<keyword id="KW-1185">Reference proteome</keyword>
<keyword id="KW-0687">Ribonucleoprotein</keyword>
<keyword id="KW-0689">Ribosomal protein</keyword>
<organism>
    <name type="scientific">Synechocystis sp. (strain ATCC 27184 / PCC 6803 / Kazusa)</name>
    <dbReference type="NCBI Taxonomy" id="1111708"/>
    <lineage>
        <taxon>Bacteria</taxon>
        <taxon>Bacillati</taxon>
        <taxon>Cyanobacteriota</taxon>
        <taxon>Cyanophyceae</taxon>
        <taxon>Synechococcales</taxon>
        <taxon>Merismopediaceae</taxon>
        <taxon>Synechocystis</taxon>
    </lineage>
</organism>
<proteinExistence type="inferred from homology"/>
<protein>
    <recommendedName>
        <fullName evidence="1">Large ribosomal subunit protein bL35</fullName>
    </recommendedName>
    <alternativeName>
        <fullName evidence="2">50S ribosomal protein L35</fullName>
    </alternativeName>
</protein>
<comment type="similarity">
    <text evidence="1">Belongs to the bacterial ribosomal protein bL35 family.</text>
</comment>
<name>RL35_SYNY3</name>
<feature type="chain" id="PRO_0000177440" description="Large ribosomal subunit protein bL35">
    <location>
        <begin position="1"/>
        <end position="67"/>
    </location>
</feature>
<dbReference type="EMBL" id="BA000022">
    <property type="protein sequence ID" value="BAA10122.1"/>
    <property type="molecule type" value="Genomic_DNA"/>
</dbReference>
<dbReference type="PIR" id="S76270">
    <property type="entry name" value="S76270"/>
</dbReference>
<dbReference type="SMR" id="P48959"/>
<dbReference type="FunCoup" id="P48959">
    <property type="interactions" value="321"/>
</dbReference>
<dbReference type="STRING" id="1148.gene:10499614"/>
<dbReference type="PaxDb" id="1148-1001497"/>
<dbReference type="EnsemblBacteria" id="BAA10122">
    <property type="protein sequence ID" value="BAA10122"/>
    <property type="gene ID" value="BAA10122"/>
</dbReference>
<dbReference type="KEGG" id="syn:ssl1426"/>
<dbReference type="eggNOG" id="COG0291">
    <property type="taxonomic scope" value="Bacteria"/>
</dbReference>
<dbReference type="InParanoid" id="P48959"/>
<dbReference type="PhylomeDB" id="P48959"/>
<dbReference type="Proteomes" id="UP000001425">
    <property type="component" value="Chromosome"/>
</dbReference>
<dbReference type="GO" id="GO:0022625">
    <property type="term" value="C:cytosolic large ribosomal subunit"/>
    <property type="evidence" value="ECO:0000318"/>
    <property type="project" value="GO_Central"/>
</dbReference>
<dbReference type="GO" id="GO:0003735">
    <property type="term" value="F:structural constituent of ribosome"/>
    <property type="evidence" value="ECO:0000318"/>
    <property type="project" value="GO_Central"/>
</dbReference>
<dbReference type="GO" id="GO:0006412">
    <property type="term" value="P:translation"/>
    <property type="evidence" value="ECO:0007669"/>
    <property type="project" value="UniProtKB-UniRule"/>
</dbReference>
<dbReference type="FunFam" id="4.10.410.60:FF:000001">
    <property type="entry name" value="50S ribosomal protein L35"/>
    <property type="match status" value="1"/>
</dbReference>
<dbReference type="Gene3D" id="4.10.410.60">
    <property type="match status" value="1"/>
</dbReference>
<dbReference type="HAMAP" id="MF_00514">
    <property type="entry name" value="Ribosomal_bL35"/>
    <property type="match status" value="1"/>
</dbReference>
<dbReference type="InterPro" id="IPR001706">
    <property type="entry name" value="Ribosomal_bL35"/>
</dbReference>
<dbReference type="InterPro" id="IPR021137">
    <property type="entry name" value="Ribosomal_bL35-like"/>
</dbReference>
<dbReference type="InterPro" id="IPR018265">
    <property type="entry name" value="Ribosomal_bL35_CS"/>
</dbReference>
<dbReference type="InterPro" id="IPR037229">
    <property type="entry name" value="Ribosomal_bL35_sf"/>
</dbReference>
<dbReference type="NCBIfam" id="TIGR00001">
    <property type="entry name" value="rpmI_bact"/>
    <property type="match status" value="1"/>
</dbReference>
<dbReference type="PANTHER" id="PTHR33343">
    <property type="entry name" value="54S RIBOSOMAL PROTEIN BL35M"/>
    <property type="match status" value="1"/>
</dbReference>
<dbReference type="PANTHER" id="PTHR33343:SF1">
    <property type="entry name" value="LARGE RIBOSOMAL SUBUNIT PROTEIN BL35M"/>
    <property type="match status" value="1"/>
</dbReference>
<dbReference type="Pfam" id="PF01632">
    <property type="entry name" value="Ribosomal_L35p"/>
    <property type="match status" value="1"/>
</dbReference>
<dbReference type="PRINTS" id="PR00064">
    <property type="entry name" value="RIBOSOMALL35"/>
</dbReference>
<dbReference type="SUPFAM" id="SSF143034">
    <property type="entry name" value="L35p-like"/>
    <property type="match status" value="1"/>
</dbReference>
<dbReference type="PROSITE" id="PS00936">
    <property type="entry name" value="RIBOSOMAL_L35"/>
    <property type="match status" value="1"/>
</dbReference>
<gene>
    <name evidence="1" type="primary">rpmI</name>
    <name evidence="1" type="synonym">rpl35</name>
    <name type="ordered locus">ssl1426</name>
</gene>
<evidence type="ECO:0000255" key="1">
    <source>
        <dbReference type="HAMAP-Rule" id="MF_00514"/>
    </source>
</evidence>
<evidence type="ECO:0000305" key="2"/>
<sequence length="67" mass="7891">MPKLKTRKAAAKRFRPTGSGKKIIRRKAFKNHLLEHKSSEQKHRRLSNLALVHEADEKNVRLMLPYM</sequence>
<accession>P48959</accession>